<gene>
    <name evidence="1" type="primary">rpsP</name>
    <name type="ordered locus">lmo1797</name>
</gene>
<evidence type="ECO:0000255" key="1">
    <source>
        <dbReference type="HAMAP-Rule" id="MF_00385"/>
    </source>
</evidence>
<evidence type="ECO:0000305" key="2"/>
<organism>
    <name type="scientific">Listeria monocytogenes serovar 1/2a (strain ATCC BAA-679 / EGD-e)</name>
    <dbReference type="NCBI Taxonomy" id="169963"/>
    <lineage>
        <taxon>Bacteria</taxon>
        <taxon>Bacillati</taxon>
        <taxon>Bacillota</taxon>
        <taxon>Bacilli</taxon>
        <taxon>Bacillales</taxon>
        <taxon>Listeriaceae</taxon>
        <taxon>Listeria</taxon>
    </lineage>
</organism>
<protein>
    <recommendedName>
        <fullName evidence="1">Small ribosomal subunit protein bS16</fullName>
    </recommendedName>
    <alternativeName>
        <fullName evidence="2">30S ribosomal protein S16</fullName>
    </alternativeName>
</protein>
<keyword id="KW-0002">3D-structure</keyword>
<keyword id="KW-1185">Reference proteome</keyword>
<keyword id="KW-0687">Ribonucleoprotein</keyword>
<keyword id="KW-0689">Ribosomal protein</keyword>
<proteinExistence type="evidence at protein level"/>
<feature type="chain" id="PRO_0000167204" description="Small ribosomal subunit protein bS16">
    <location>
        <begin position="1"/>
        <end position="90"/>
    </location>
</feature>
<accession>Q8Y699</accession>
<dbReference type="EMBL" id="AL591981">
    <property type="protein sequence ID" value="CAC99875.1"/>
    <property type="molecule type" value="Genomic_DNA"/>
</dbReference>
<dbReference type="PIR" id="AE1299">
    <property type="entry name" value="AE1299"/>
</dbReference>
<dbReference type="RefSeq" id="NP_465322.1">
    <property type="nucleotide sequence ID" value="NC_003210.1"/>
</dbReference>
<dbReference type="RefSeq" id="WP_003720111.1">
    <property type="nucleotide sequence ID" value="NZ_CP149495.1"/>
</dbReference>
<dbReference type="PDB" id="7NHN">
    <property type="method" value="EM"/>
    <property type="resolution" value="2.90 A"/>
    <property type="chains" value="q=1-90"/>
</dbReference>
<dbReference type="PDBsum" id="7NHN"/>
<dbReference type="EMDB" id="EMD-12334"/>
<dbReference type="SMR" id="Q8Y699"/>
<dbReference type="STRING" id="169963.gene:17594482"/>
<dbReference type="PaxDb" id="169963-lmo1797"/>
<dbReference type="EnsemblBacteria" id="CAC99875">
    <property type="protein sequence ID" value="CAC99875"/>
    <property type="gene ID" value="CAC99875"/>
</dbReference>
<dbReference type="GeneID" id="93239707"/>
<dbReference type="GeneID" id="985931"/>
<dbReference type="KEGG" id="lmo:lmo1797"/>
<dbReference type="PATRIC" id="fig|169963.11.peg.1841"/>
<dbReference type="eggNOG" id="COG0228">
    <property type="taxonomic scope" value="Bacteria"/>
</dbReference>
<dbReference type="HOGENOM" id="CLU_100590_5_0_9"/>
<dbReference type="OrthoDB" id="9807878at2"/>
<dbReference type="PhylomeDB" id="Q8Y699"/>
<dbReference type="BioCyc" id="LMON169963:LMO1797-MONOMER"/>
<dbReference type="Proteomes" id="UP000000817">
    <property type="component" value="Chromosome"/>
</dbReference>
<dbReference type="GO" id="GO:0005737">
    <property type="term" value="C:cytoplasm"/>
    <property type="evidence" value="ECO:0007669"/>
    <property type="project" value="UniProtKB-ARBA"/>
</dbReference>
<dbReference type="GO" id="GO:0015935">
    <property type="term" value="C:small ribosomal subunit"/>
    <property type="evidence" value="ECO:0000318"/>
    <property type="project" value="GO_Central"/>
</dbReference>
<dbReference type="GO" id="GO:0003735">
    <property type="term" value="F:structural constituent of ribosome"/>
    <property type="evidence" value="ECO:0000318"/>
    <property type="project" value="GO_Central"/>
</dbReference>
<dbReference type="GO" id="GO:0006412">
    <property type="term" value="P:translation"/>
    <property type="evidence" value="ECO:0007669"/>
    <property type="project" value="UniProtKB-UniRule"/>
</dbReference>
<dbReference type="FunFam" id="3.30.1320.10:FF:000002">
    <property type="entry name" value="30S ribosomal protein S16"/>
    <property type="match status" value="1"/>
</dbReference>
<dbReference type="Gene3D" id="3.30.1320.10">
    <property type="match status" value="1"/>
</dbReference>
<dbReference type="HAMAP" id="MF_00385">
    <property type="entry name" value="Ribosomal_bS16"/>
    <property type="match status" value="1"/>
</dbReference>
<dbReference type="InterPro" id="IPR000307">
    <property type="entry name" value="Ribosomal_bS16"/>
</dbReference>
<dbReference type="InterPro" id="IPR023803">
    <property type="entry name" value="Ribosomal_bS16_dom_sf"/>
</dbReference>
<dbReference type="NCBIfam" id="TIGR00002">
    <property type="entry name" value="S16"/>
    <property type="match status" value="1"/>
</dbReference>
<dbReference type="PANTHER" id="PTHR12919">
    <property type="entry name" value="30S RIBOSOMAL PROTEIN S16"/>
    <property type="match status" value="1"/>
</dbReference>
<dbReference type="PANTHER" id="PTHR12919:SF20">
    <property type="entry name" value="SMALL RIBOSOMAL SUBUNIT PROTEIN BS16M"/>
    <property type="match status" value="1"/>
</dbReference>
<dbReference type="Pfam" id="PF00886">
    <property type="entry name" value="Ribosomal_S16"/>
    <property type="match status" value="1"/>
</dbReference>
<dbReference type="SUPFAM" id="SSF54565">
    <property type="entry name" value="Ribosomal protein S16"/>
    <property type="match status" value="1"/>
</dbReference>
<sequence>MAVKIRLKRIGSKKKPFYRIVVADSRFPRDGRSIETIGTYNPLLDPVEVKIDEEATLKWMHNGAKPSDTVRNLLSREGIMEKFHNQKLGK</sequence>
<name>RS16_LISMO</name>
<reference key="1">
    <citation type="journal article" date="2001" name="Science">
        <title>Comparative genomics of Listeria species.</title>
        <authorList>
            <person name="Glaser P."/>
            <person name="Frangeul L."/>
            <person name="Buchrieser C."/>
            <person name="Rusniok C."/>
            <person name="Amend A."/>
            <person name="Baquero F."/>
            <person name="Berche P."/>
            <person name="Bloecker H."/>
            <person name="Brandt P."/>
            <person name="Chakraborty T."/>
            <person name="Charbit A."/>
            <person name="Chetouani F."/>
            <person name="Couve E."/>
            <person name="de Daruvar A."/>
            <person name="Dehoux P."/>
            <person name="Domann E."/>
            <person name="Dominguez-Bernal G."/>
            <person name="Duchaud E."/>
            <person name="Durant L."/>
            <person name="Dussurget O."/>
            <person name="Entian K.-D."/>
            <person name="Fsihi H."/>
            <person name="Garcia-del Portillo F."/>
            <person name="Garrido P."/>
            <person name="Gautier L."/>
            <person name="Goebel W."/>
            <person name="Gomez-Lopez N."/>
            <person name="Hain T."/>
            <person name="Hauf J."/>
            <person name="Jackson D."/>
            <person name="Jones L.-M."/>
            <person name="Kaerst U."/>
            <person name="Kreft J."/>
            <person name="Kuhn M."/>
            <person name="Kunst F."/>
            <person name="Kurapkat G."/>
            <person name="Madueno E."/>
            <person name="Maitournam A."/>
            <person name="Mata Vicente J."/>
            <person name="Ng E."/>
            <person name="Nedjari H."/>
            <person name="Nordsiek G."/>
            <person name="Novella S."/>
            <person name="de Pablos B."/>
            <person name="Perez-Diaz J.-C."/>
            <person name="Purcell R."/>
            <person name="Remmel B."/>
            <person name="Rose M."/>
            <person name="Schlueter T."/>
            <person name="Simoes N."/>
            <person name="Tierrez A."/>
            <person name="Vazquez-Boland J.-A."/>
            <person name="Voss H."/>
            <person name="Wehland J."/>
            <person name="Cossart P."/>
        </authorList>
    </citation>
    <scope>NUCLEOTIDE SEQUENCE [LARGE SCALE GENOMIC DNA]</scope>
    <source>
        <strain>ATCC BAA-679 / EGD-e</strain>
    </source>
</reference>
<comment type="similarity">
    <text evidence="1">Belongs to the bacterial ribosomal protein bS16 family.</text>
</comment>